<reference key="1">
    <citation type="journal article" date="2009" name="J. Bacteriol.">
        <title>Complete and draft genome sequences of six members of the Aquificales.</title>
        <authorList>
            <person name="Reysenbach A.-L."/>
            <person name="Hamamura N."/>
            <person name="Podar M."/>
            <person name="Griffiths E."/>
            <person name="Ferreira S."/>
            <person name="Hochstein R."/>
            <person name="Heidelberg J."/>
            <person name="Johnson J."/>
            <person name="Mead D."/>
            <person name="Pohorille A."/>
            <person name="Sarmiento M."/>
            <person name="Schweighofer K."/>
            <person name="Seshadri R."/>
            <person name="Voytek M.A."/>
        </authorList>
    </citation>
    <scope>NUCLEOTIDE SEQUENCE [LARGE SCALE GENOMIC DNA]</scope>
    <source>
        <strain>YO3AOP1</strain>
    </source>
</reference>
<accession>B2V6Y9</accession>
<protein>
    <recommendedName>
        <fullName evidence="1">CinA-like protein</fullName>
    </recommendedName>
</protein>
<dbReference type="EMBL" id="CP001080">
    <property type="protein sequence ID" value="ACD65771.1"/>
    <property type="molecule type" value="Genomic_DNA"/>
</dbReference>
<dbReference type="RefSeq" id="WP_012458862.1">
    <property type="nucleotide sequence ID" value="NC_010730.1"/>
</dbReference>
<dbReference type="SMR" id="B2V6Y9"/>
<dbReference type="STRING" id="436114.SYO3AOP1_0125"/>
<dbReference type="KEGG" id="sul:SYO3AOP1_0125"/>
<dbReference type="eggNOG" id="COG1058">
    <property type="taxonomic scope" value="Bacteria"/>
</dbReference>
<dbReference type="eggNOG" id="COG1546">
    <property type="taxonomic scope" value="Bacteria"/>
</dbReference>
<dbReference type="HOGENOM" id="CLU_030805_9_3_0"/>
<dbReference type="CDD" id="cd00885">
    <property type="entry name" value="cinA"/>
    <property type="match status" value="1"/>
</dbReference>
<dbReference type="Gene3D" id="3.90.950.20">
    <property type="entry name" value="CinA-like"/>
    <property type="match status" value="1"/>
</dbReference>
<dbReference type="Gene3D" id="3.40.980.10">
    <property type="entry name" value="MoaB/Mog-like domain"/>
    <property type="match status" value="1"/>
</dbReference>
<dbReference type="HAMAP" id="MF_00226_B">
    <property type="entry name" value="CinA_B"/>
    <property type="match status" value="1"/>
</dbReference>
<dbReference type="InterPro" id="IPR050101">
    <property type="entry name" value="CinA"/>
</dbReference>
<dbReference type="InterPro" id="IPR036653">
    <property type="entry name" value="CinA-like_C"/>
</dbReference>
<dbReference type="InterPro" id="IPR008136">
    <property type="entry name" value="CinA_C"/>
</dbReference>
<dbReference type="InterPro" id="IPR008135">
    <property type="entry name" value="Competence-induced_CinA"/>
</dbReference>
<dbReference type="InterPro" id="IPR036425">
    <property type="entry name" value="MoaB/Mog-like_dom_sf"/>
</dbReference>
<dbReference type="InterPro" id="IPR001453">
    <property type="entry name" value="MoaB/Mog_dom"/>
</dbReference>
<dbReference type="NCBIfam" id="TIGR00199">
    <property type="entry name" value="PncC_domain"/>
    <property type="match status" value="1"/>
</dbReference>
<dbReference type="PANTHER" id="PTHR13939">
    <property type="entry name" value="NICOTINAMIDE-NUCLEOTIDE AMIDOHYDROLASE PNCC"/>
    <property type="match status" value="1"/>
</dbReference>
<dbReference type="PANTHER" id="PTHR13939:SF0">
    <property type="entry name" value="NMN AMIDOHYDROLASE-LIKE PROTEIN YFAY"/>
    <property type="match status" value="1"/>
</dbReference>
<dbReference type="Pfam" id="PF02464">
    <property type="entry name" value="CinA"/>
    <property type="match status" value="1"/>
</dbReference>
<dbReference type="Pfam" id="PF00994">
    <property type="entry name" value="MoCF_biosynth"/>
    <property type="match status" value="1"/>
</dbReference>
<dbReference type="PIRSF" id="PIRSF006728">
    <property type="entry name" value="CinA"/>
    <property type="match status" value="1"/>
</dbReference>
<dbReference type="SMART" id="SM00852">
    <property type="entry name" value="MoCF_biosynth"/>
    <property type="match status" value="1"/>
</dbReference>
<dbReference type="SUPFAM" id="SSF142433">
    <property type="entry name" value="CinA-like"/>
    <property type="match status" value="1"/>
</dbReference>
<dbReference type="SUPFAM" id="SSF53218">
    <property type="entry name" value="Molybdenum cofactor biosynthesis proteins"/>
    <property type="match status" value="1"/>
</dbReference>
<feature type="chain" id="PRO_1000100339" description="CinA-like protein">
    <location>
        <begin position="1"/>
        <end position="400"/>
    </location>
</feature>
<gene>
    <name type="ordered locus">SYO3AOP1_0125</name>
</gene>
<evidence type="ECO:0000255" key="1">
    <source>
        <dbReference type="HAMAP-Rule" id="MF_00226"/>
    </source>
</evidence>
<sequence length="400" mass="44674">MKAIIIIAGSEFVQGRKQDKNGLFIAKNLFERGVDVQGIIISPDSHYELLNYIKFALDRADLVFISGGLGPTTDDNTRMAVSEAIGVPLIYNEEWLNKLKTYYKSNNVEITEERKSMAKIPYGSAIIENPVGRAVGFIKVLDDIKKAVVALPGVPSEMEPMFYKALEMLNINEKKRYTKLFRVFGIKELDLNYLLNDMKDLSYNFSPKGIDVFLYDTTLESFKEKEKKIKDRLGTFIYAEDNLEMEEVVGKLLRENKKTVATAESSTGGLIVSRLVNVPGSSGYVLGGIVSYVNEVKINLLKVNEEDIKNFGAVSEPVAKQMVEGVRNLINSDLAVSDTGIAGPTGESPNKPLGLHYIGFTDGKETKVYKEIYQGSRNDVRLYISQFALNLIRLYLISNS</sequence>
<proteinExistence type="inferred from homology"/>
<comment type="similarity">
    <text evidence="1">Belongs to the CinA family.</text>
</comment>
<organism>
    <name type="scientific">Sulfurihydrogenibium sp. (strain YO3AOP1)</name>
    <dbReference type="NCBI Taxonomy" id="436114"/>
    <lineage>
        <taxon>Bacteria</taxon>
        <taxon>Pseudomonadati</taxon>
        <taxon>Aquificota</taxon>
        <taxon>Aquificia</taxon>
        <taxon>Aquificales</taxon>
        <taxon>Hydrogenothermaceae</taxon>
        <taxon>Sulfurihydrogenibium</taxon>
    </lineage>
</organism>
<name>CINAL_SULSY</name>